<keyword id="KW-0028">Amino-acid biosynthesis</keyword>
<keyword id="KW-0055">Arginine biosynthesis</keyword>
<keyword id="KW-0067">ATP-binding</keyword>
<keyword id="KW-0963">Cytoplasm</keyword>
<keyword id="KW-0418">Kinase</keyword>
<keyword id="KW-0547">Nucleotide-binding</keyword>
<keyword id="KW-1185">Reference proteome</keyword>
<keyword id="KW-0808">Transferase</keyword>
<protein>
    <recommendedName>
        <fullName evidence="1">Acetylglutamate kinase</fullName>
        <ecNumber evidence="1">2.7.2.8</ecNumber>
    </recommendedName>
    <alternativeName>
        <fullName evidence="1">N-acetyl-L-glutamate 5-phosphotransferase</fullName>
    </alternativeName>
    <alternativeName>
        <fullName evidence="1">NAG kinase</fullName>
        <shortName evidence="1">NAGK</shortName>
    </alternativeName>
</protein>
<evidence type="ECO:0000255" key="1">
    <source>
        <dbReference type="HAMAP-Rule" id="MF_00082"/>
    </source>
</evidence>
<accession>B0KBW1</accession>
<comment type="function">
    <text evidence="1">Catalyzes the ATP-dependent phosphorylation of N-acetyl-L-glutamate.</text>
</comment>
<comment type="catalytic activity">
    <reaction evidence="1">
        <text>N-acetyl-L-glutamate + ATP = N-acetyl-L-glutamyl 5-phosphate + ADP</text>
        <dbReference type="Rhea" id="RHEA:14629"/>
        <dbReference type="ChEBI" id="CHEBI:30616"/>
        <dbReference type="ChEBI" id="CHEBI:44337"/>
        <dbReference type="ChEBI" id="CHEBI:57936"/>
        <dbReference type="ChEBI" id="CHEBI:456216"/>
        <dbReference type="EC" id="2.7.2.8"/>
    </reaction>
</comment>
<comment type="pathway">
    <text evidence="1">Amino-acid biosynthesis; L-arginine biosynthesis; N(2)-acetyl-L-ornithine from L-glutamate: step 2/4.</text>
</comment>
<comment type="subcellular location">
    <subcellularLocation>
        <location evidence="1">Cytoplasm</location>
    </subcellularLocation>
</comment>
<comment type="similarity">
    <text evidence="1">Belongs to the acetylglutamate kinase family. ArgB subfamily.</text>
</comment>
<dbReference type="EC" id="2.7.2.8" evidence="1"/>
<dbReference type="EMBL" id="CP000924">
    <property type="protein sequence ID" value="ABY93897.1"/>
    <property type="molecule type" value="Genomic_DNA"/>
</dbReference>
<dbReference type="RefSeq" id="WP_012268932.1">
    <property type="nucleotide sequence ID" value="NC_010321.1"/>
</dbReference>
<dbReference type="SMR" id="B0KBW1"/>
<dbReference type="STRING" id="340099.Teth39_0225"/>
<dbReference type="KEGG" id="tpd:Teth39_0225"/>
<dbReference type="eggNOG" id="COG0548">
    <property type="taxonomic scope" value="Bacteria"/>
</dbReference>
<dbReference type="HOGENOM" id="CLU_053680_0_0_9"/>
<dbReference type="UniPathway" id="UPA00068">
    <property type="reaction ID" value="UER00107"/>
</dbReference>
<dbReference type="Proteomes" id="UP000002156">
    <property type="component" value="Chromosome"/>
</dbReference>
<dbReference type="GO" id="GO:0005737">
    <property type="term" value="C:cytoplasm"/>
    <property type="evidence" value="ECO:0007669"/>
    <property type="project" value="UniProtKB-SubCell"/>
</dbReference>
<dbReference type="GO" id="GO:0003991">
    <property type="term" value="F:acetylglutamate kinase activity"/>
    <property type="evidence" value="ECO:0007669"/>
    <property type="project" value="UniProtKB-UniRule"/>
</dbReference>
<dbReference type="GO" id="GO:0005524">
    <property type="term" value="F:ATP binding"/>
    <property type="evidence" value="ECO:0007669"/>
    <property type="project" value="UniProtKB-UniRule"/>
</dbReference>
<dbReference type="GO" id="GO:0042450">
    <property type="term" value="P:arginine biosynthetic process via ornithine"/>
    <property type="evidence" value="ECO:0007669"/>
    <property type="project" value="UniProtKB-UniRule"/>
</dbReference>
<dbReference type="GO" id="GO:0006526">
    <property type="term" value="P:L-arginine biosynthetic process"/>
    <property type="evidence" value="ECO:0007669"/>
    <property type="project" value="UniProtKB-UniPathway"/>
</dbReference>
<dbReference type="CDD" id="cd04250">
    <property type="entry name" value="AAK_NAGK-C"/>
    <property type="match status" value="1"/>
</dbReference>
<dbReference type="FunFam" id="3.40.1160.10:FF:000004">
    <property type="entry name" value="Acetylglutamate kinase"/>
    <property type="match status" value="1"/>
</dbReference>
<dbReference type="Gene3D" id="3.40.1160.10">
    <property type="entry name" value="Acetylglutamate kinase-like"/>
    <property type="match status" value="1"/>
</dbReference>
<dbReference type="HAMAP" id="MF_00082">
    <property type="entry name" value="ArgB"/>
    <property type="match status" value="1"/>
</dbReference>
<dbReference type="InterPro" id="IPR036393">
    <property type="entry name" value="AceGlu_kinase-like_sf"/>
</dbReference>
<dbReference type="InterPro" id="IPR004662">
    <property type="entry name" value="AcgluKinase_fam"/>
</dbReference>
<dbReference type="InterPro" id="IPR037528">
    <property type="entry name" value="ArgB"/>
</dbReference>
<dbReference type="InterPro" id="IPR001048">
    <property type="entry name" value="Asp/Glu/Uridylate_kinase"/>
</dbReference>
<dbReference type="InterPro" id="IPR041727">
    <property type="entry name" value="NAGK-C"/>
</dbReference>
<dbReference type="NCBIfam" id="TIGR00761">
    <property type="entry name" value="argB"/>
    <property type="match status" value="1"/>
</dbReference>
<dbReference type="PANTHER" id="PTHR23342">
    <property type="entry name" value="N-ACETYLGLUTAMATE SYNTHASE"/>
    <property type="match status" value="1"/>
</dbReference>
<dbReference type="PANTHER" id="PTHR23342:SF0">
    <property type="entry name" value="N-ACETYLGLUTAMATE SYNTHASE, MITOCHONDRIAL"/>
    <property type="match status" value="1"/>
</dbReference>
<dbReference type="Pfam" id="PF00696">
    <property type="entry name" value="AA_kinase"/>
    <property type="match status" value="1"/>
</dbReference>
<dbReference type="PIRSF" id="PIRSF000728">
    <property type="entry name" value="NAGK"/>
    <property type="match status" value="1"/>
</dbReference>
<dbReference type="PRINTS" id="PR01469">
    <property type="entry name" value="CARBMTKINASE"/>
</dbReference>
<dbReference type="SUPFAM" id="SSF53633">
    <property type="entry name" value="Carbamate kinase-like"/>
    <property type="match status" value="1"/>
</dbReference>
<proteinExistence type="inferred from homology"/>
<name>ARGB_THEP3</name>
<gene>
    <name evidence="1" type="primary">argB</name>
    <name type="ordered locus">Teth39_0225</name>
</gene>
<reference key="1">
    <citation type="submission" date="2008-01" db="EMBL/GenBank/DDBJ databases">
        <title>Complete sequence of Thermoanaerobacter pseudethanolicus 39E.</title>
        <authorList>
            <person name="Copeland A."/>
            <person name="Lucas S."/>
            <person name="Lapidus A."/>
            <person name="Barry K."/>
            <person name="Glavina del Rio T."/>
            <person name="Dalin E."/>
            <person name="Tice H."/>
            <person name="Pitluck S."/>
            <person name="Bruce D."/>
            <person name="Goodwin L."/>
            <person name="Saunders E."/>
            <person name="Brettin T."/>
            <person name="Detter J.C."/>
            <person name="Han C."/>
            <person name="Schmutz J."/>
            <person name="Larimer F."/>
            <person name="Land M."/>
            <person name="Hauser L."/>
            <person name="Kyrpides N."/>
            <person name="Lykidis A."/>
            <person name="Hemme C."/>
            <person name="Fields M.W."/>
            <person name="He Z."/>
            <person name="Zhou J."/>
            <person name="Richardson P."/>
        </authorList>
    </citation>
    <scope>NUCLEOTIDE SEQUENCE [LARGE SCALE GENOMIC DNA]</scope>
    <source>
        <strain>ATCC 33223 / DSM 2355 / 39E</strain>
    </source>
</reference>
<sequence>MIRRQKYGDEIAKAQVLIEALPYIKKFSGKTVVIKYGGSAMLDCNLKRMVMQDIVLMKFVGLNPIVVHGGGPEINKMLERLGIESKFVNGLRVTDEATMEIVEMVLTGRINKEIVSLINELGGQAIGVSGKDGRLLKAEKDTSNGDIGYVGKIVDVNIDVITMMLEKGYIPVIAPTSFGDDGKTYNVNADTAAGKIAEALKAEKLILLTDVEGILSNINDKSSLISRMDLEHAKEFMNSGRINGGMIPKLECCIKAVENGVKRAHIIDGRLTHSLLLEIFTDEGIGTMIGKECFDDDNL</sequence>
<organism>
    <name type="scientific">Thermoanaerobacter pseudethanolicus (strain ATCC 33223 / 39E)</name>
    <name type="common">Clostridium thermohydrosulfuricum</name>
    <dbReference type="NCBI Taxonomy" id="340099"/>
    <lineage>
        <taxon>Bacteria</taxon>
        <taxon>Bacillati</taxon>
        <taxon>Bacillota</taxon>
        <taxon>Clostridia</taxon>
        <taxon>Thermoanaerobacterales</taxon>
        <taxon>Thermoanaerobacteraceae</taxon>
        <taxon>Thermoanaerobacter</taxon>
    </lineage>
</organism>
<feature type="chain" id="PRO_1000092890" description="Acetylglutamate kinase">
    <location>
        <begin position="1"/>
        <end position="299"/>
    </location>
</feature>
<feature type="binding site" evidence="1">
    <location>
        <begin position="70"/>
        <end position="71"/>
    </location>
    <ligand>
        <name>substrate</name>
    </ligand>
</feature>
<feature type="binding site" evidence="1">
    <location>
        <position position="92"/>
    </location>
    <ligand>
        <name>substrate</name>
    </ligand>
</feature>
<feature type="binding site" evidence="1">
    <location>
        <position position="186"/>
    </location>
    <ligand>
        <name>substrate</name>
    </ligand>
</feature>
<feature type="site" description="Transition state stabilizer" evidence="1">
    <location>
        <position position="35"/>
    </location>
</feature>
<feature type="site" description="Transition state stabilizer" evidence="1">
    <location>
        <position position="249"/>
    </location>
</feature>